<name>CR3AA_BACTM</name>
<dbReference type="EMBL" id="M37207">
    <property type="protein sequence ID" value="AAA50255.1"/>
    <property type="molecule type" value="Genomic_DNA"/>
</dbReference>
<dbReference type="RefSeq" id="WP_052574943.1">
    <property type="nucleotide sequence ID" value="NZ_CP010582.1"/>
</dbReference>
<dbReference type="SMR" id="P0A380"/>
<dbReference type="TCDB" id="1.C.2.1.7">
    <property type="family name" value="the channel-forming Delta-endotoxin insecticidal crystal protein (icp) family"/>
</dbReference>
<dbReference type="GO" id="GO:0005102">
    <property type="term" value="F:signaling receptor binding"/>
    <property type="evidence" value="ECO:0007669"/>
    <property type="project" value="InterPro"/>
</dbReference>
<dbReference type="GO" id="GO:0090729">
    <property type="term" value="F:toxin activity"/>
    <property type="evidence" value="ECO:0007669"/>
    <property type="project" value="UniProtKB-KW"/>
</dbReference>
<dbReference type="GO" id="GO:0030435">
    <property type="term" value="P:sporulation resulting in formation of a cellular spore"/>
    <property type="evidence" value="ECO:0007669"/>
    <property type="project" value="UniProtKB-KW"/>
</dbReference>
<dbReference type="GO" id="GO:0001907">
    <property type="term" value="P:symbiont-mediated killing of host cell"/>
    <property type="evidence" value="ECO:0007669"/>
    <property type="project" value="InterPro"/>
</dbReference>
<dbReference type="CDD" id="cd04085">
    <property type="entry name" value="delta_endotoxin_C"/>
    <property type="match status" value="1"/>
</dbReference>
<dbReference type="Gene3D" id="2.60.120.260">
    <property type="entry name" value="Galactose-binding domain-like"/>
    <property type="match status" value="1"/>
</dbReference>
<dbReference type="Gene3D" id="2.100.10.10">
    <property type="entry name" value="Pesticidal crystal protein, central domain"/>
    <property type="match status" value="1"/>
</dbReference>
<dbReference type="Gene3D" id="1.20.190.10">
    <property type="entry name" value="Pesticidal crystal protein, N-terminal domain"/>
    <property type="match status" value="1"/>
</dbReference>
<dbReference type="InterPro" id="IPR008979">
    <property type="entry name" value="Galactose-bd-like_sf"/>
</dbReference>
<dbReference type="InterPro" id="IPR038979">
    <property type="entry name" value="Pest_crys"/>
</dbReference>
<dbReference type="InterPro" id="IPR005638">
    <property type="entry name" value="Pest_crys_dom-III"/>
</dbReference>
<dbReference type="InterPro" id="IPR005639">
    <property type="entry name" value="Pest_crys_dom_I"/>
</dbReference>
<dbReference type="InterPro" id="IPR036716">
    <property type="entry name" value="Pest_crys_N_sf"/>
</dbReference>
<dbReference type="InterPro" id="IPR036399">
    <property type="entry name" value="Pest_cryst_cen_dom_sf"/>
</dbReference>
<dbReference type="InterPro" id="IPR001178">
    <property type="entry name" value="Pest_cryst_dom_II"/>
</dbReference>
<dbReference type="PANTHER" id="PTHR37003">
    <property type="entry name" value="ENDOTOXIN_N DOMAIN-CONTAINING PROTEIN-RELATED"/>
    <property type="match status" value="1"/>
</dbReference>
<dbReference type="PANTHER" id="PTHR37003:SF2">
    <property type="entry name" value="PESTICIDAL CRYSTAL PROTEIN N-TERMINAL DOMAIN-CONTAINING PROTEIN"/>
    <property type="match status" value="1"/>
</dbReference>
<dbReference type="Pfam" id="PF03944">
    <property type="entry name" value="Endotoxin_C"/>
    <property type="match status" value="1"/>
</dbReference>
<dbReference type="Pfam" id="PF00555">
    <property type="entry name" value="Endotoxin_M"/>
    <property type="match status" value="1"/>
</dbReference>
<dbReference type="Pfam" id="PF03945">
    <property type="entry name" value="Endotoxin_N"/>
    <property type="match status" value="1"/>
</dbReference>
<dbReference type="SUPFAM" id="SSF51096">
    <property type="entry name" value="delta-Endotoxin (insectocide), middle domain"/>
    <property type="match status" value="1"/>
</dbReference>
<dbReference type="SUPFAM" id="SSF56849">
    <property type="entry name" value="delta-Endotoxin (insectocide), N-terminal domain"/>
    <property type="match status" value="1"/>
</dbReference>
<dbReference type="SUPFAM" id="SSF49785">
    <property type="entry name" value="Galactose-binding domain-like"/>
    <property type="match status" value="1"/>
</dbReference>
<protein>
    <recommendedName>
        <fullName>Pesticidal crystal protein Cry3Aa</fullName>
    </recommendedName>
    <alternativeName>
        <fullName>73 kDa crystal protein</fullName>
    </alternativeName>
    <alternativeName>
        <fullName>Crystaline entomocidal protoxin</fullName>
    </alternativeName>
    <alternativeName>
        <fullName>Insecticidal delta-endotoxin CryIIIA(a)</fullName>
    </alternativeName>
</protein>
<feature type="propeptide" id="PRO_0000006343" description="Removed in mature form">
    <location>
        <begin position="1"/>
        <end position="57"/>
    </location>
</feature>
<feature type="chain" id="PRO_0000006344" description="Pesticidal crystal protein Cry3Aa">
    <location>
        <begin position="58"/>
        <end position="644"/>
    </location>
</feature>
<feature type="region of interest" description="Disordered" evidence="1">
    <location>
        <begin position="1"/>
        <end position="20"/>
    </location>
</feature>
<feature type="compositionally biased region" description="Basic and acidic residues" evidence="1">
    <location>
        <begin position="1"/>
        <end position="13"/>
    </location>
</feature>
<sequence>MNPNNRSEHDTIKTTENNEVPTNHVQYPLAETPNPTLEDLNYKEFLRMTADNNTEALDSSTTKDVIQKGISVVGDLLGVVGFPFGGALVSFYTNFLNTIWPSEDPWKAFMEQVEALMDQKIADYAKNKALAELQGLQNNVEDYVSALSSWQKNPVSSRNPHSQGRIRELFSQAESHFRNSMPSFAISGYEVLFLTTYAQAANTHLFLLKDAQIYGEEWGYEKEDIAEFYKRQLKLTQEYTDHCVKWYNVGLDKLRGSSYESWVNFNRYRREMTLTVLDLIALFPLYDVRLYPKEVKTELTRDVLTDPIVGVNNLRGYGTTFSNIENYIRKPHLFDYLHRIQFHTRFQPGYYGNDSFNYWSGNYVSTRPSIGSNDIITSPFYGNKSSEPVQNLEFNGEKVYRAVANTNLAVWPSAVYSGVTKVEFSQYNDQTDEASTQTYDSKRNVGAVSWDSIDQLPPETTDEPLEKGYSHQLNYVMCFLMQGSRGTIPVLTWTHKSVDFFNMIDSKKITQLPLVKAYKLQSGASVVAGPRFTGGDIIQCTENGSAATIYVTPDVSYSQKYRARIHYASTSQITFTLSLDGAPFNQYYFDKTINKGDTLTYNSFNLASFSTPFELSGNNLQIGVTGLSAGDKVYIDKIEFIPVN</sequence>
<evidence type="ECO:0000256" key="1">
    <source>
        <dbReference type="SAM" id="MobiDB-lite"/>
    </source>
</evidence>
<evidence type="ECO:0000305" key="2"/>
<proteinExistence type="evidence at transcript level"/>
<accession>P0A380</accession>
<accession>P07130</accession>
<accession>P21255</accession>
<gene>
    <name type="primary">cry3Aa</name>
    <name type="synonym">bt13</name>
    <name type="synonym">cry3A</name>
    <name type="synonym">cryC</name>
    <name type="synonym">cryIIIa</name>
    <name type="synonym">cryIIIA(a)</name>
</gene>
<reference key="1">
    <citation type="journal article" date="1988" name="Mol. Gen. Genet.">
        <title>Isolation and characterization of EG2158, a new strain of Bacillus thuringiensis toxic to coleopteran larvae, and nucleotide sequence of the toxin gene.</title>
        <authorList>
            <person name="Donovan W.P."/>
            <person name="Gonzalez J.M. Jr."/>
            <person name="Gilbert M.P."/>
            <person name="Dankocsik C.C."/>
        </authorList>
    </citation>
    <scope>NUCLEOTIDE SEQUENCE [GENOMIC DNA]</scope>
    <source>
        <strain>EG2158</strain>
    </source>
</reference>
<keyword id="KW-0749">Sporulation</keyword>
<keyword id="KW-0800">Toxin</keyword>
<keyword id="KW-0843">Virulence</keyword>
<organism>
    <name type="scientific">Bacillus thuringiensis subsp. morrisoni</name>
    <dbReference type="NCBI Taxonomy" id="1441"/>
    <lineage>
        <taxon>Bacteria</taxon>
        <taxon>Bacillati</taxon>
        <taxon>Bacillota</taxon>
        <taxon>Bacilli</taxon>
        <taxon>Bacillales</taxon>
        <taxon>Bacillaceae</taxon>
        <taxon>Bacillus</taxon>
        <taxon>Bacillus cereus group</taxon>
    </lineage>
</organism>
<comment type="function">
    <text>Promotes colloidosmotic lysis by binding to the midgut epithelial cells of Coleoptera.</text>
</comment>
<comment type="developmental stage">
    <text>The crystal protein is produced during sporulation and is accumulated both as an inclusion and as part of the spore coat.</text>
</comment>
<comment type="miscellaneous">
    <text>Toxic segment of the protein is located in the N-terminus.</text>
</comment>
<comment type="similarity">
    <text evidence="2">Belongs to the delta endotoxin family.</text>
</comment>